<gene>
    <name evidence="1" type="primary">frr</name>
    <name type="ordered locus">glr0288</name>
</gene>
<dbReference type="EMBL" id="BA000045">
    <property type="protein sequence ID" value="BAC88229.1"/>
    <property type="molecule type" value="Genomic_DNA"/>
</dbReference>
<dbReference type="RefSeq" id="NP_923234.1">
    <property type="nucleotide sequence ID" value="NC_005125.1"/>
</dbReference>
<dbReference type="SMR" id="Q7NNX0"/>
<dbReference type="FunCoup" id="Q7NNX0">
    <property type="interactions" value="257"/>
</dbReference>
<dbReference type="STRING" id="251221.gene:10757760"/>
<dbReference type="EnsemblBacteria" id="BAC88229">
    <property type="protein sequence ID" value="BAC88229"/>
    <property type="gene ID" value="BAC88229"/>
</dbReference>
<dbReference type="KEGG" id="gvi:glr0288"/>
<dbReference type="PATRIC" id="fig|251221.4.peg.290"/>
<dbReference type="eggNOG" id="COG0233">
    <property type="taxonomic scope" value="Bacteria"/>
</dbReference>
<dbReference type="HOGENOM" id="CLU_073981_2_0_3"/>
<dbReference type="InParanoid" id="Q7NNX0"/>
<dbReference type="OrthoDB" id="9804006at2"/>
<dbReference type="PhylomeDB" id="Q7NNX0"/>
<dbReference type="Proteomes" id="UP000000557">
    <property type="component" value="Chromosome"/>
</dbReference>
<dbReference type="GO" id="GO:0005737">
    <property type="term" value="C:cytoplasm"/>
    <property type="evidence" value="ECO:0007669"/>
    <property type="project" value="UniProtKB-SubCell"/>
</dbReference>
<dbReference type="GO" id="GO:0043023">
    <property type="term" value="F:ribosomal large subunit binding"/>
    <property type="evidence" value="ECO:0000318"/>
    <property type="project" value="GO_Central"/>
</dbReference>
<dbReference type="GO" id="GO:0006412">
    <property type="term" value="P:translation"/>
    <property type="evidence" value="ECO:0000318"/>
    <property type="project" value="GO_Central"/>
</dbReference>
<dbReference type="GO" id="GO:0006415">
    <property type="term" value="P:translational termination"/>
    <property type="evidence" value="ECO:0007669"/>
    <property type="project" value="UniProtKB-UniRule"/>
</dbReference>
<dbReference type="CDD" id="cd00520">
    <property type="entry name" value="RRF"/>
    <property type="match status" value="1"/>
</dbReference>
<dbReference type="FunFam" id="1.10.132.20:FF:000001">
    <property type="entry name" value="Ribosome-recycling factor"/>
    <property type="match status" value="1"/>
</dbReference>
<dbReference type="FunFam" id="3.30.1360.40:FF:000001">
    <property type="entry name" value="Ribosome-recycling factor"/>
    <property type="match status" value="1"/>
</dbReference>
<dbReference type="Gene3D" id="3.30.1360.40">
    <property type="match status" value="1"/>
</dbReference>
<dbReference type="Gene3D" id="1.10.132.20">
    <property type="entry name" value="Ribosome-recycling factor"/>
    <property type="match status" value="1"/>
</dbReference>
<dbReference type="HAMAP" id="MF_00040">
    <property type="entry name" value="RRF"/>
    <property type="match status" value="1"/>
</dbReference>
<dbReference type="InterPro" id="IPR002661">
    <property type="entry name" value="Ribosome_recyc_fac"/>
</dbReference>
<dbReference type="InterPro" id="IPR023584">
    <property type="entry name" value="Ribosome_recyc_fac_dom"/>
</dbReference>
<dbReference type="InterPro" id="IPR036191">
    <property type="entry name" value="RRF_sf"/>
</dbReference>
<dbReference type="NCBIfam" id="TIGR00496">
    <property type="entry name" value="frr"/>
    <property type="match status" value="1"/>
</dbReference>
<dbReference type="PANTHER" id="PTHR20982:SF3">
    <property type="entry name" value="MITOCHONDRIAL RIBOSOME RECYCLING FACTOR PSEUDO 1"/>
    <property type="match status" value="1"/>
</dbReference>
<dbReference type="PANTHER" id="PTHR20982">
    <property type="entry name" value="RIBOSOME RECYCLING FACTOR"/>
    <property type="match status" value="1"/>
</dbReference>
<dbReference type="Pfam" id="PF01765">
    <property type="entry name" value="RRF"/>
    <property type="match status" value="1"/>
</dbReference>
<dbReference type="SUPFAM" id="SSF55194">
    <property type="entry name" value="Ribosome recycling factor, RRF"/>
    <property type="match status" value="1"/>
</dbReference>
<proteinExistence type="inferred from homology"/>
<evidence type="ECO:0000255" key="1">
    <source>
        <dbReference type="HAMAP-Rule" id="MF_00040"/>
    </source>
</evidence>
<name>RRF_GLOVI</name>
<keyword id="KW-0963">Cytoplasm</keyword>
<keyword id="KW-0648">Protein biosynthesis</keyword>
<keyword id="KW-1185">Reference proteome</keyword>
<sequence>MNVSKTEQDMRKAIEATAGNFATIRTGRASTSLLDRINVEYYGQPTPLKTLATITTPDASTVLIQPYDPSSLRLIEKTILESDLGLPPSNDGKTIRLNIPPLTAERRKDLVKVLRNLAEEGRVAVRNIRRHAIDEVRKEEKDAKVSEDEARRLQDEVQKLTDKSIQQIEKLFEAKEKEITTV</sequence>
<feature type="chain" id="PRO_0000167465" description="Ribosome-recycling factor">
    <location>
        <begin position="1"/>
        <end position="182"/>
    </location>
</feature>
<organism>
    <name type="scientific">Gloeobacter violaceus (strain ATCC 29082 / PCC 7421)</name>
    <dbReference type="NCBI Taxonomy" id="251221"/>
    <lineage>
        <taxon>Bacteria</taxon>
        <taxon>Bacillati</taxon>
        <taxon>Cyanobacteriota</taxon>
        <taxon>Cyanophyceae</taxon>
        <taxon>Gloeobacterales</taxon>
        <taxon>Gloeobacteraceae</taxon>
        <taxon>Gloeobacter</taxon>
    </lineage>
</organism>
<protein>
    <recommendedName>
        <fullName evidence="1">Ribosome-recycling factor</fullName>
        <shortName evidence="1">RRF</shortName>
    </recommendedName>
    <alternativeName>
        <fullName evidence="1">Ribosome-releasing factor</fullName>
    </alternativeName>
</protein>
<reference key="1">
    <citation type="journal article" date="2003" name="DNA Res.">
        <title>Complete genome structure of Gloeobacter violaceus PCC 7421, a cyanobacterium that lacks thylakoids.</title>
        <authorList>
            <person name="Nakamura Y."/>
            <person name="Kaneko T."/>
            <person name="Sato S."/>
            <person name="Mimuro M."/>
            <person name="Miyashita H."/>
            <person name="Tsuchiya T."/>
            <person name="Sasamoto S."/>
            <person name="Watanabe A."/>
            <person name="Kawashima K."/>
            <person name="Kishida Y."/>
            <person name="Kiyokawa C."/>
            <person name="Kohara M."/>
            <person name="Matsumoto M."/>
            <person name="Matsuno A."/>
            <person name="Nakazaki N."/>
            <person name="Shimpo S."/>
            <person name="Takeuchi C."/>
            <person name="Yamada M."/>
            <person name="Tabata S."/>
        </authorList>
    </citation>
    <scope>NUCLEOTIDE SEQUENCE [LARGE SCALE GENOMIC DNA]</scope>
    <source>
        <strain>ATCC 29082 / PCC 7421</strain>
    </source>
</reference>
<accession>Q7NNX0</accession>
<comment type="function">
    <text evidence="1">Responsible for the release of ribosomes from messenger RNA at the termination of protein biosynthesis. May increase the efficiency of translation by recycling ribosomes from one round of translation to another.</text>
</comment>
<comment type="subcellular location">
    <subcellularLocation>
        <location evidence="1">Cytoplasm</location>
    </subcellularLocation>
</comment>
<comment type="similarity">
    <text evidence="1">Belongs to the RRF family.</text>
</comment>